<evidence type="ECO:0000255" key="1">
    <source>
        <dbReference type="HAMAP-Rule" id="MF_03118"/>
    </source>
</evidence>
<evidence type="ECO:0000305" key="2"/>
<comment type="catalytic activity">
    <reaction evidence="1">
        <text>5-(methylsulfanyl)-D-ribulose 1-phosphate = 5-methylsulfanyl-2,3-dioxopentyl phosphate + H2O</text>
        <dbReference type="Rhea" id="RHEA:15549"/>
        <dbReference type="ChEBI" id="CHEBI:15377"/>
        <dbReference type="ChEBI" id="CHEBI:58548"/>
        <dbReference type="ChEBI" id="CHEBI:58828"/>
        <dbReference type="EC" id="4.2.1.109"/>
    </reaction>
</comment>
<comment type="catalytic activity">
    <reaction evidence="1">
        <text>5-methylsulfanyl-2,3-dioxopentyl phosphate + H2O = 1,2-dihydroxy-5-(methylsulfanyl)pent-1-en-3-one + phosphate</text>
        <dbReference type="Rhea" id="RHEA:21700"/>
        <dbReference type="ChEBI" id="CHEBI:15377"/>
        <dbReference type="ChEBI" id="CHEBI:43474"/>
        <dbReference type="ChEBI" id="CHEBI:49252"/>
        <dbReference type="ChEBI" id="CHEBI:58828"/>
        <dbReference type="EC" id="3.1.3.77"/>
    </reaction>
</comment>
<comment type="cofactor">
    <cofactor evidence="1">
        <name>Zn(2+)</name>
        <dbReference type="ChEBI" id="CHEBI:29105"/>
    </cofactor>
    <text evidence="1">Binds 1 zinc ion per subunit.</text>
</comment>
<comment type="cofactor">
    <cofactor evidence="1">
        <name>Mg(2+)</name>
        <dbReference type="ChEBI" id="CHEBI:18420"/>
    </cofactor>
    <text evidence="1">Binds 1 Mg(2+) ion per subunit.</text>
</comment>
<comment type="pathway">
    <text evidence="1">Amino-acid biosynthesis; L-methionine biosynthesis via salvage pathway; L-methionine from S-methyl-5-thio-alpha-D-ribose 1-phosphate: step 2/6.</text>
</comment>
<comment type="pathway">
    <text evidence="1">Amino-acid biosynthesis; L-methionine biosynthesis via salvage pathway; L-methionine from S-methyl-5-thio-alpha-D-ribose 1-phosphate: step 3/6.</text>
</comment>
<comment type="pathway">
    <text evidence="1">Amino-acid biosynthesis; L-methionine biosynthesis via salvage pathway; L-methionine from S-methyl-5-thio-alpha-D-ribose 1-phosphate: step 4/6.</text>
</comment>
<comment type="similarity">
    <text evidence="1">In the N-terminal section; belongs to the aldolase class II family. MtnB subfamily.</text>
</comment>
<comment type="similarity">
    <text evidence="1">In the C-terminal section; belongs to the HAD-like hydrolase superfamily. MasA/MtnC family.</text>
</comment>
<gene>
    <name type="ORF">OsI_36120</name>
</gene>
<feature type="chain" id="PRO_0000394158" description="Probable bifunctional methylthioribulose-1-phosphate dehydratase/enolase-phosphatase E1">
    <location>
        <begin position="1"/>
        <end position="518"/>
    </location>
</feature>
<feature type="region of interest" description="Methylthioribulose-1-phosphate dehydratase" evidence="1">
    <location>
        <begin position="1"/>
        <end position="242"/>
    </location>
</feature>
<feature type="region of interest" description="Enolase-phosphatase E1" evidence="1">
    <location>
        <begin position="279"/>
        <end position="518"/>
    </location>
</feature>
<feature type="active site" description="Proton donor/acceptor; for methylthioribulose-1-phosphate dehydratase activity" evidence="1">
    <location>
        <position position="157"/>
    </location>
</feature>
<feature type="binding site" evidence="1">
    <location>
        <position position="114"/>
    </location>
    <ligand>
        <name>substrate</name>
        <label>1</label>
        <note>for methylthioribulose-1-phosphate dehydratase activity</note>
    </ligand>
</feature>
<feature type="binding site" evidence="1">
    <location>
        <position position="132"/>
    </location>
    <ligand>
        <name>Zn(2+)</name>
        <dbReference type="ChEBI" id="CHEBI:29105"/>
    </ligand>
</feature>
<feature type="binding site" evidence="1">
    <location>
        <position position="134"/>
    </location>
    <ligand>
        <name>Zn(2+)</name>
        <dbReference type="ChEBI" id="CHEBI:29105"/>
    </ligand>
</feature>
<feature type="binding site" evidence="1">
    <location>
        <position position="207"/>
    </location>
    <ligand>
        <name>Zn(2+)</name>
        <dbReference type="ChEBI" id="CHEBI:29105"/>
    </ligand>
</feature>
<feature type="binding site" evidence="1">
    <location>
        <position position="282"/>
    </location>
    <ligand>
        <name>Mg(2+)</name>
        <dbReference type="ChEBI" id="CHEBI:18420"/>
    </ligand>
</feature>
<feature type="binding site" evidence="1">
    <location>
        <position position="284"/>
    </location>
    <ligand>
        <name>Mg(2+)</name>
        <dbReference type="ChEBI" id="CHEBI:18420"/>
    </ligand>
</feature>
<feature type="binding site" evidence="1">
    <location>
        <begin position="417"/>
        <end position="418"/>
    </location>
    <ligand>
        <name>substrate</name>
        <label>2</label>
        <note>for enolase-phosphatase activity</note>
    </ligand>
</feature>
<feature type="binding site" evidence="1">
    <location>
        <position position="451"/>
    </location>
    <ligand>
        <name>substrate</name>
        <label>2</label>
        <note>for enolase-phosphatase activity</note>
    </ligand>
</feature>
<feature type="binding site" evidence="1">
    <location>
        <position position="477"/>
    </location>
    <ligand>
        <name>Mg(2+)</name>
        <dbReference type="ChEBI" id="CHEBI:18420"/>
    </ligand>
</feature>
<feature type="sequence conflict" description="In Ref. 2; ABR25676." evidence="2" ref="2">
    <original>T</original>
    <variation>H</variation>
    <location>
        <position position="447"/>
    </location>
</feature>
<keyword id="KW-0028">Amino-acid biosynthesis</keyword>
<keyword id="KW-0378">Hydrolase</keyword>
<keyword id="KW-0456">Lyase</keyword>
<keyword id="KW-0460">Magnesium</keyword>
<keyword id="KW-0479">Metal-binding</keyword>
<keyword id="KW-0486">Methionine biosynthesis</keyword>
<keyword id="KW-0511">Multifunctional enzyme</keyword>
<keyword id="KW-1185">Reference proteome</keyword>
<keyword id="KW-0862">Zinc</keyword>
<organism>
    <name type="scientific">Oryza sativa subsp. indica</name>
    <name type="common">Rice</name>
    <dbReference type="NCBI Taxonomy" id="39946"/>
    <lineage>
        <taxon>Eukaryota</taxon>
        <taxon>Viridiplantae</taxon>
        <taxon>Streptophyta</taxon>
        <taxon>Embryophyta</taxon>
        <taxon>Tracheophyta</taxon>
        <taxon>Spermatophyta</taxon>
        <taxon>Magnoliopsida</taxon>
        <taxon>Liliopsida</taxon>
        <taxon>Poales</taxon>
        <taxon>Poaceae</taxon>
        <taxon>BOP clade</taxon>
        <taxon>Oryzoideae</taxon>
        <taxon>Oryzeae</taxon>
        <taxon>Oryzinae</taxon>
        <taxon>Oryza</taxon>
        <taxon>Oryza sativa</taxon>
    </lineage>
</organism>
<accession>B8BKI7</accession>
<accession>A6N0A6</accession>
<name>MTBC_ORYSI</name>
<protein>
    <recommendedName>
        <fullName evidence="1">Probable bifunctional methylthioribulose-1-phosphate dehydratase/enolase-phosphatase E1</fullName>
    </recommendedName>
    <domain>
        <recommendedName>
            <fullName evidence="1">Methylthioribulose-1-phosphate dehydratase</fullName>
            <shortName evidence="1">MTRu-1-P dehydratase</shortName>
            <ecNumber evidence="1">4.2.1.109</ecNumber>
        </recommendedName>
    </domain>
    <domain>
        <recommendedName>
            <fullName evidence="1">Enolase-phosphatase E1</fullName>
            <ecNumber evidence="1">3.1.3.77</ecNumber>
        </recommendedName>
        <alternativeName>
            <fullName evidence="1">2,3-diketo-5-methylthio-1-phosphopentane phosphatase</fullName>
        </alternativeName>
    </domain>
</protein>
<dbReference type="EC" id="4.2.1.109" evidence="1"/>
<dbReference type="EC" id="3.1.3.77" evidence="1"/>
<dbReference type="EMBL" id="CM000136">
    <property type="protein sequence ID" value="EEC68173.1"/>
    <property type="molecule type" value="Genomic_DNA"/>
</dbReference>
<dbReference type="EMBL" id="EF576088">
    <property type="protein sequence ID" value="ABR25676.1"/>
    <property type="molecule type" value="mRNA"/>
</dbReference>
<dbReference type="SMR" id="B8BKI7"/>
<dbReference type="STRING" id="39946.B8BKI7"/>
<dbReference type="EnsemblPlants" id="BGIOSGA033987-TA">
    <property type="protein sequence ID" value="BGIOSGA033987-PA"/>
    <property type="gene ID" value="BGIOSGA033987"/>
</dbReference>
<dbReference type="Gramene" id="BGIOSGA033987-TA">
    <property type="protein sequence ID" value="BGIOSGA033987-PA"/>
    <property type="gene ID" value="BGIOSGA033987"/>
</dbReference>
<dbReference type="HOGENOM" id="CLU_023273_3_1_1"/>
<dbReference type="OMA" id="IPNGCHA"/>
<dbReference type="UniPathway" id="UPA00904">
    <property type="reaction ID" value="UER00875"/>
</dbReference>
<dbReference type="UniPathway" id="UPA00904">
    <property type="reaction ID" value="UER00876"/>
</dbReference>
<dbReference type="UniPathway" id="UPA00904">
    <property type="reaction ID" value="UER00877"/>
</dbReference>
<dbReference type="Proteomes" id="UP000007015">
    <property type="component" value="Chromosome 11"/>
</dbReference>
<dbReference type="GO" id="GO:0005737">
    <property type="term" value="C:cytoplasm"/>
    <property type="evidence" value="ECO:0007669"/>
    <property type="project" value="InterPro"/>
</dbReference>
<dbReference type="GO" id="GO:0043874">
    <property type="term" value="F:acireductone synthase activity"/>
    <property type="evidence" value="ECO:0007669"/>
    <property type="project" value="UniProtKB-EC"/>
</dbReference>
<dbReference type="GO" id="GO:0000287">
    <property type="term" value="F:magnesium ion binding"/>
    <property type="evidence" value="ECO:0007669"/>
    <property type="project" value="UniProtKB-UniRule"/>
</dbReference>
<dbReference type="GO" id="GO:0046570">
    <property type="term" value="F:methylthioribulose 1-phosphate dehydratase activity"/>
    <property type="evidence" value="ECO:0007669"/>
    <property type="project" value="UniProtKB-UniRule"/>
</dbReference>
<dbReference type="GO" id="GO:0008270">
    <property type="term" value="F:zinc ion binding"/>
    <property type="evidence" value="ECO:0007669"/>
    <property type="project" value="UniProtKB-UniRule"/>
</dbReference>
<dbReference type="GO" id="GO:0019509">
    <property type="term" value="P:L-methionine salvage from methylthioadenosine"/>
    <property type="evidence" value="ECO:0007669"/>
    <property type="project" value="UniProtKB-UniRule"/>
</dbReference>
<dbReference type="CDD" id="cd01629">
    <property type="entry name" value="HAD_EP"/>
    <property type="match status" value="1"/>
</dbReference>
<dbReference type="FunFam" id="1.10.720.60:FF:000001">
    <property type="entry name" value="Probable bifunctional methylthioribulose-1-phosphate dehydratase/enolase-phosphatase E1"/>
    <property type="match status" value="1"/>
</dbReference>
<dbReference type="FunFam" id="3.40.225.10:FF:000010">
    <property type="entry name" value="Probable bifunctional methylthioribulose-1-phosphate dehydratase/enolase-phosphatase E1"/>
    <property type="match status" value="1"/>
</dbReference>
<dbReference type="FunFam" id="3.40.50.1000:FF:000088">
    <property type="entry name" value="Probable bifunctional methylthioribulose-1-phosphate dehydratase/enolase-phosphatase E1"/>
    <property type="match status" value="1"/>
</dbReference>
<dbReference type="Gene3D" id="1.10.720.60">
    <property type="match status" value="1"/>
</dbReference>
<dbReference type="Gene3D" id="3.40.225.10">
    <property type="entry name" value="Class II aldolase/adducin N-terminal domain"/>
    <property type="match status" value="1"/>
</dbReference>
<dbReference type="Gene3D" id="3.40.50.1000">
    <property type="entry name" value="HAD superfamily/HAD-like"/>
    <property type="match status" value="1"/>
</dbReference>
<dbReference type="HAMAP" id="MF_03116">
    <property type="entry name" value="Salvage_MtnB_euk"/>
    <property type="match status" value="1"/>
</dbReference>
<dbReference type="HAMAP" id="MF_03118">
    <property type="entry name" value="Salvage_MtnBC"/>
    <property type="match status" value="1"/>
</dbReference>
<dbReference type="InterPro" id="IPR001303">
    <property type="entry name" value="Aldolase_II/adducin_N"/>
</dbReference>
<dbReference type="InterPro" id="IPR036409">
    <property type="entry name" value="Aldolase_II/adducin_N_sf"/>
</dbReference>
<dbReference type="InterPro" id="IPR023943">
    <property type="entry name" value="Enolase-ppase_E1"/>
</dbReference>
<dbReference type="InterPro" id="IPR036412">
    <property type="entry name" value="HAD-like_sf"/>
</dbReference>
<dbReference type="InterPro" id="IPR006439">
    <property type="entry name" value="HAD-SF_hydro_IA"/>
</dbReference>
<dbReference type="InterPro" id="IPR023214">
    <property type="entry name" value="HAD_sf"/>
</dbReference>
<dbReference type="InterPro" id="IPR017714">
    <property type="entry name" value="MethylthioRu-1-P_deHdtase_MtnB"/>
</dbReference>
<dbReference type="InterPro" id="IPR027505">
    <property type="entry name" value="MtnB_viridiplantae"/>
</dbReference>
<dbReference type="InterPro" id="IPR027514">
    <property type="entry name" value="Salvage_MtnB_euk"/>
</dbReference>
<dbReference type="NCBIfam" id="TIGR01691">
    <property type="entry name" value="enolase-ppase"/>
    <property type="match status" value="1"/>
</dbReference>
<dbReference type="NCBIfam" id="TIGR01549">
    <property type="entry name" value="HAD-SF-IA-v1"/>
    <property type="match status" value="1"/>
</dbReference>
<dbReference type="NCBIfam" id="TIGR03328">
    <property type="entry name" value="salvage_mtnB"/>
    <property type="match status" value="1"/>
</dbReference>
<dbReference type="PANTHER" id="PTHR20371">
    <property type="entry name" value="ENOLASE-PHOSPHATASE E1"/>
    <property type="match status" value="1"/>
</dbReference>
<dbReference type="PANTHER" id="PTHR20371:SF1">
    <property type="entry name" value="ENOLASE-PHOSPHATASE E1"/>
    <property type="match status" value="1"/>
</dbReference>
<dbReference type="Pfam" id="PF00596">
    <property type="entry name" value="Aldolase_II"/>
    <property type="match status" value="1"/>
</dbReference>
<dbReference type="Pfam" id="PF00702">
    <property type="entry name" value="Hydrolase"/>
    <property type="match status" value="1"/>
</dbReference>
<dbReference type="SFLD" id="SFLDG01133">
    <property type="entry name" value="C1.5.4:_Enolase-phosphatase_Li"/>
    <property type="match status" value="1"/>
</dbReference>
<dbReference type="SFLD" id="SFLDF00044">
    <property type="entry name" value="enolase-phosphatase"/>
    <property type="match status" value="1"/>
</dbReference>
<dbReference type="SMART" id="SM01007">
    <property type="entry name" value="Aldolase_II"/>
    <property type="match status" value="1"/>
</dbReference>
<dbReference type="SUPFAM" id="SSF53639">
    <property type="entry name" value="AraD/HMP-PK domain-like"/>
    <property type="match status" value="1"/>
</dbReference>
<dbReference type="SUPFAM" id="SSF56784">
    <property type="entry name" value="HAD-like"/>
    <property type="match status" value="1"/>
</dbReference>
<sequence>MACCGGGRGEGAAATESEAYLEGEAVREARELVAELCRHFYGQGWVTGTVGSITVKANDPALPLADQLIVMSPSGVQKERMVAEDMYVLSADGKVLSSPVSKPWPNKPPKCTDCAPLFMKAYLMRGAGAVIHSHGMETCIATMLDHGAKEFRMTHMEMIKGIKGHGYRDELVVPIIENTPYEYELTDSLAEAIAAYPKATAVLVRNHGIYVWGDSWINAKTQAECYHYLFDAAIKLYQLGIDWTTPEHGPINSAKRPRSVLSSSIPNGCPDSKSSKHCVVLDIEGTTTPISFVTDVMFPYARDNVRKHLTSTYSSDETKEDIKLLRIQVEEDLKNGIVGSVPIPPDDADKEEVINALVANVESMIKADRKITSLKQLQGHIWRTGFESKELQGVVFDDVPEALKHWHASGMKVYIYSSGSREAQRLLFGNTAYGDLRQYLCGFFDTTTGNKRETRSYFEISQSLGVDSPAQILFITDVFQEAVAAKSAGFEVIISIRPGNAPLPENHGFRTIKSFSEI</sequence>
<proteinExistence type="evidence at transcript level"/>
<reference key="1">
    <citation type="journal article" date="2005" name="PLoS Biol.">
        <title>The genomes of Oryza sativa: a history of duplications.</title>
        <authorList>
            <person name="Yu J."/>
            <person name="Wang J."/>
            <person name="Lin W."/>
            <person name="Li S."/>
            <person name="Li H."/>
            <person name="Zhou J."/>
            <person name="Ni P."/>
            <person name="Dong W."/>
            <person name="Hu S."/>
            <person name="Zeng C."/>
            <person name="Zhang J."/>
            <person name="Zhang Y."/>
            <person name="Li R."/>
            <person name="Xu Z."/>
            <person name="Li S."/>
            <person name="Li X."/>
            <person name="Zheng H."/>
            <person name="Cong L."/>
            <person name="Lin L."/>
            <person name="Yin J."/>
            <person name="Geng J."/>
            <person name="Li G."/>
            <person name="Shi J."/>
            <person name="Liu J."/>
            <person name="Lv H."/>
            <person name="Li J."/>
            <person name="Wang J."/>
            <person name="Deng Y."/>
            <person name="Ran L."/>
            <person name="Shi X."/>
            <person name="Wang X."/>
            <person name="Wu Q."/>
            <person name="Li C."/>
            <person name="Ren X."/>
            <person name="Wang J."/>
            <person name="Wang X."/>
            <person name="Li D."/>
            <person name="Liu D."/>
            <person name="Zhang X."/>
            <person name="Ji Z."/>
            <person name="Zhao W."/>
            <person name="Sun Y."/>
            <person name="Zhang Z."/>
            <person name="Bao J."/>
            <person name="Han Y."/>
            <person name="Dong L."/>
            <person name="Ji J."/>
            <person name="Chen P."/>
            <person name="Wu S."/>
            <person name="Liu J."/>
            <person name="Xiao Y."/>
            <person name="Bu D."/>
            <person name="Tan J."/>
            <person name="Yang L."/>
            <person name="Ye C."/>
            <person name="Zhang J."/>
            <person name="Xu J."/>
            <person name="Zhou Y."/>
            <person name="Yu Y."/>
            <person name="Zhang B."/>
            <person name="Zhuang S."/>
            <person name="Wei H."/>
            <person name="Liu B."/>
            <person name="Lei M."/>
            <person name="Yu H."/>
            <person name="Li Y."/>
            <person name="Xu H."/>
            <person name="Wei S."/>
            <person name="He X."/>
            <person name="Fang L."/>
            <person name="Zhang Z."/>
            <person name="Zhang Y."/>
            <person name="Huang X."/>
            <person name="Su Z."/>
            <person name="Tong W."/>
            <person name="Li J."/>
            <person name="Tong Z."/>
            <person name="Li S."/>
            <person name="Ye J."/>
            <person name="Wang L."/>
            <person name="Fang L."/>
            <person name="Lei T."/>
            <person name="Chen C.-S."/>
            <person name="Chen H.-C."/>
            <person name="Xu Z."/>
            <person name="Li H."/>
            <person name="Huang H."/>
            <person name="Zhang F."/>
            <person name="Xu H."/>
            <person name="Li N."/>
            <person name="Zhao C."/>
            <person name="Li S."/>
            <person name="Dong L."/>
            <person name="Huang Y."/>
            <person name="Li L."/>
            <person name="Xi Y."/>
            <person name="Qi Q."/>
            <person name="Li W."/>
            <person name="Zhang B."/>
            <person name="Hu W."/>
            <person name="Zhang Y."/>
            <person name="Tian X."/>
            <person name="Jiao Y."/>
            <person name="Liang X."/>
            <person name="Jin J."/>
            <person name="Gao L."/>
            <person name="Zheng W."/>
            <person name="Hao B."/>
            <person name="Liu S.-M."/>
            <person name="Wang W."/>
            <person name="Yuan L."/>
            <person name="Cao M."/>
            <person name="McDermott J."/>
            <person name="Samudrala R."/>
            <person name="Wang J."/>
            <person name="Wong G.K.-S."/>
            <person name="Yang H."/>
        </authorList>
    </citation>
    <scope>NUCLEOTIDE SEQUENCE [LARGE SCALE GENOMIC DNA]</scope>
    <source>
        <strain>cv. 93-11</strain>
    </source>
</reference>
<reference key="2">
    <citation type="submission" date="2007-04" db="EMBL/GenBank/DDBJ databases">
        <title>A comparative transcriptome map of early and late salinity stress responses in contrasting genotypes of Oryza sativa L.</title>
        <authorList>
            <person name="Kumari S."/>
            <person name="Panjabi V."/>
            <person name="Singla-Pareek S.L."/>
            <person name="Sopory S.K."/>
            <person name="Pareek A."/>
        </authorList>
    </citation>
    <scope>NUCLEOTIDE SEQUENCE [LARGE SCALE MRNA] OF 211-465</scope>
</reference>